<reference key="1">
    <citation type="submission" date="2001-06" db="EMBL/GenBank/DDBJ databases">
        <title>Identification of FHA-HIT as a novel nuclear protein involved in cell-cycle regulation.</title>
        <authorList>
            <person name="Huang C.-H."/>
        </authorList>
    </citation>
    <scope>NUCLEOTIDE SEQUENCE [GENOMIC DNA / MRNA] (ISOFORM 1)</scope>
    <source>
        <strain>BALB/cJ</strain>
        <strain>C57BL/6J</strain>
    </source>
</reference>
<reference key="2">
    <citation type="submission" date="2002-12" db="EMBL/GenBank/DDBJ databases">
        <title>Differential polyadenylation of mouse FHA-HIT transcript.</title>
        <authorList>
            <person name="Chen Y."/>
            <person name="Huang C.-H."/>
        </authorList>
    </citation>
    <scope>NUCLEOTIDE SEQUENCE [MRNA] (ISOFORM 1)</scope>
</reference>
<reference key="3">
    <citation type="journal article" date="2005" name="Science">
        <title>The transcriptional landscape of the mammalian genome.</title>
        <authorList>
            <person name="Carninci P."/>
            <person name="Kasukawa T."/>
            <person name="Katayama S."/>
            <person name="Gough J."/>
            <person name="Frith M.C."/>
            <person name="Maeda N."/>
            <person name="Oyama R."/>
            <person name="Ravasi T."/>
            <person name="Lenhard B."/>
            <person name="Wells C."/>
            <person name="Kodzius R."/>
            <person name="Shimokawa K."/>
            <person name="Bajic V.B."/>
            <person name="Brenner S.E."/>
            <person name="Batalov S."/>
            <person name="Forrest A.R."/>
            <person name="Zavolan M."/>
            <person name="Davis M.J."/>
            <person name="Wilming L.G."/>
            <person name="Aidinis V."/>
            <person name="Allen J.E."/>
            <person name="Ambesi-Impiombato A."/>
            <person name="Apweiler R."/>
            <person name="Aturaliya R.N."/>
            <person name="Bailey T.L."/>
            <person name="Bansal M."/>
            <person name="Baxter L."/>
            <person name="Beisel K.W."/>
            <person name="Bersano T."/>
            <person name="Bono H."/>
            <person name="Chalk A.M."/>
            <person name="Chiu K.P."/>
            <person name="Choudhary V."/>
            <person name="Christoffels A."/>
            <person name="Clutterbuck D.R."/>
            <person name="Crowe M.L."/>
            <person name="Dalla E."/>
            <person name="Dalrymple B.P."/>
            <person name="de Bono B."/>
            <person name="Della Gatta G."/>
            <person name="di Bernardo D."/>
            <person name="Down T."/>
            <person name="Engstrom P."/>
            <person name="Fagiolini M."/>
            <person name="Faulkner G."/>
            <person name="Fletcher C.F."/>
            <person name="Fukushima T."/>
            <person name="Furuno M."/>
            <person name="Futaki S."/>
            <person name="Gariboldi M."/>
            <person name="Georgii-Hemming P."/>
            <person name="Gingeras T.R."/>
            <person name="Gojobori T."/>
            <person name="Green R.E."/>
            <person name="Gustincich S."/>
            <person name="Harbers M."/>
            <person name="Hayashi Y."/>
            <person name="Hensch T.K."/>
            <person name="Hirokawa N."/>
            <person name="Hill D."/>
            <person name="Huminiecki L."/>
            <person name="Iacono M."/>
            <person name="Ikeo K."/>
            <person name="Iwama A."/>
            <person name="Ishikawa T."/>
            <person name="Jakt M."/>
            <person name="Kanapin A."/>
            <person name="Katoh M."/>
            <person name="Kawasawa Y."/>
            <person name="Kelso J."/>
            <person name="Kitamura H."/>
            <person name="Kitano H."/>
            <person name="Kollias G."/>
            <person name="Krishnan S.P."/>
            <person name="Kruger A."/>
            <person name="Kummerfeld S.K."/>
            <person name="Kurochkin I.V."/>
            <person name="Lareau L.F."/>
            <person name="Lazarevic D."/>
            <person name="Lipovich L."/>
            <person name="Liu J."/>
            <person name="Liuni S."/>
            <person name="McWilliam S."/>
            <person name="Madan Babu M."/>
            <person name="Madera M."/>
            <person name="Marchionni L."/>
            <person name="Matsuda H."/>
            <person name="Matsuzawa S."/>
            <person name="Miki H."/>
            <person name="Mignone F."/>
            <person name="Miyake S."/>
            <person name="Morris K."/>
            <person name="Mottagui-Tabar S."/>
            <person name="Mulder N."/>
            <person name="Nakano N."/>
            <person name="Nakauchi H."/>
            <person name="Ng P."/>
            <person name="Nilsson R."/>
            <person name="Nishiguchi S."/>
            <person name="Nishikawa S."/>
            <person name="Nori F."/>
            <person name="Ohara O."/>
            <person name="Okazaki Y."/>
            <person name="Orlando V."/>
            <person name="Pang K.C."/>
            <person name="Pavan W.J."/>
            <person name="Pavesi G."/>
            <person name="Pesole G."/>
            <person name="Petrovsky N."/>
            <person name="Piazza S."/>
            <person name="Reed J."/>
            <person name="Reid J.F."/>
            <person name="Ring B.Z."/>
            <person name="Ringwald M."/>
            <person name="Rost B."/>
            <person name="Ruan Y."/>
            <person name="Salzberg S.L."/>
            <person name="Sandelin A."/>
            <person name="Schneider C."/>
            <person name="Schoenbach C."/>
            <person name="Sekiguchi K."/>
            <person name="Semple C.A."/>
            <person name="Seno S."/>
            <person name="Sessa L."/>
            <person name="Sheng Y."/>
            <person name="Shibata Y."/>
            <person name="Shimada H."/>
            <person name="Shimada K."/>
            <person name="Silva D."/>
            <person name="Sinclair B."/>
            <person name="Sperling S."/>
            <person name="Stupka E."/>
            <person name="Sugiura K."/>
            <person name="Sultana R."/>
            <person name="Takenaka Y."/>
            <person name="Taki K."/>
            <person name="Tammoja K."/>
            <person name="Tan S.L."/>
            <person name="Tang S."/>
            <person name="Taylor M.S."/>
            <person name="Tegner J."/>
            <person name="Teichmann S.A."/>
            <person name="Ueda H.R."/>
            <person name="van Nimwegen E."/>
            <person name="Verardo R."/>
            <person name="Wei C.L."/>
            <person name="Yagi K."/>
            <person name="Yamanishi H."/>
            <person name="Zabarovsky E."/>
            <person name="Zhu S."/>
            <person name="Zimmer A."/>
            <person name="Hide W."/>
            <person name="Bult C."/>
            <person name="Grimmond S.M."/>
            <person name="Teasdale R.D."/>
            <person name="Liu E.T."/>
            <person name="Brusic V."/>
            <person name="Quackenbush J."/>
            <person name="Wahlestedt C."/>
            <person name="Mattick J.S."/>
            <person name="Hume D.A."/>
            <person name="Kai C."/>
            <person name="Sasaki D."/>
            <person name="Tomaru Y."/>
            <person name="Fukuda S."/>
            <person name="Kanamori-Katayama M."/>
            <person name="Suzuki M."/>
            <person name="Aoki J."/>
            <person name="Arakawa T."/>
            <person name="Iida J."/>
            <person name="Imamura K."/>
            <person name="Itoh M."/>
            <person name="Kato T."/>
            <person name="Kawaji H."/>
            <person name="Kawagashira N."/>
            <person name="Kawashima T."/>
            <person name="Kojima M."/>
            <person name="Kondo S."/>
            <person name="Konno H."/>
            <person name="Nakano K."/>
            <person name="Ninomiya N."/>
            <person name="Nishio T."/>
            <person name="Okada M."/>
            <person name="Plessy C."/>
            <person name="Shibata K."/>
            <person name="Shiraki T."/>
            <person name="Suzuki S."/>
            <person name="Tagami M."/>
            <person name="Waki K."/>
            <person name="Watahiki A."/>
            <person name="Okamura-Oho Y."/>
            <person name="Suzuki H."/>
            <person name="Kawai J."/>
            <person name="Hayashizaki Y."/>
        </authorList>
    </citation>
    <scope>NUCLEOTIDE SEQUENCE [LARGE SCALE MRNA] (ISOFORMS 1; 2; 3 AND 4)</scope>
    <source>
        <strain>C57BL/6J</strain>
        <strain>NOD</strain>
        <tissue>Cerebellum</tissue>
        <tissue>Embryonic stem cell</tissue>
        <tissue>Pituitary</tissue>
        <tissue>Thymus</tissue>
    </source>
</reference>
<reference key="4">
    <citation type="journal article" date="2004" name="Genome Res.">
        <title>The status, quality, and expansion of the NIH full-length cDNA project: the Mammalian Gene Collection (MGC).</title>
        <authorList>
            <consortium name="The MGC Project Team"/>
        </authorList>
    </citation>
    <scope>NUCLEOTIDE SEQUENCE [LARGE SCALE MRNA] (ISOFORM 3)</scope>
    <source>
        <strain>Czech II</strain>
        <tissue>Mammary tumor</tissue>
    </source>
</reference>
<reference key="5">
    <citation type="journal article" date="2001" name="Nat. Genet.">
        <title>The gene mutated in ataxia-ocular apraxia 1 encodes the new HIT/Zn-finger protein aprataxin.</title>
        <authorList>
            <person name="Moreira M.-C."/>
            <person name="Barbot C."/>
            <person name="Tachi N."/>
            <person name="Kozuka N."/>
            <person name="Uchida E."/>
            <person name="Gibson T."/>
            <person name="Mendonca P."/>
            <person name="Costa M."/>
            <person name="Barros J."/>
            <person name="Yanagisawa T."/>
            <person name="Watanabe M."/>
            <person name="Ikeda Y."/>
            <person name="Aoki M."/>
            <person name="Nagata T."/>
            <person name="Coutinho P."/>
            <person name="Sequeiros J."/>
            <person name="Koenig M."/>
        </authorList>
    </citation>
    <scope>TISSUE SPECIFICITY</scope>
</reference>
<reference key="6">
    <citation type="journal article" date="2006" name="Nature">
        <title>The neurodegenerative disease protein aprataxin resolves abortive DNA ligation intermediates.</title>
        <authorList>
            <person name="Ahel I."/>
            <person name="Rass U."/>
            <person name="El-Khamisy S.F."/>
            <person name="Katyal S."/>
            <person name="Clements P.M."/>
            <person name="McKinnon P.J."/>
            <person name="Caldecott K.W."/>
            <person name="West S.C."/>
        </authorList>
    </citation>
    <scope>FUNCTION</scope>
    <scope>CATALYTIC ACTIVITY</scope>
</reference>
<reference key="7">
    <citation type="journal article" date="2007" name="Proc. Natl. Acad. Sci. U.S.A.">
        <title>Large-scale phosphorylation analysis of mouse liver.</title>
        <authorList>
            <person name="Villen J."/>
            <person name="Beausoleil S.A."/>
            <person name="Gerber S.A."/>
            <person name="Gygi S.P."/>
        </authorList>
    </citation>
    <scope>IDENTIFICATION BY MASS SPECTROMETRY [LARGE SCALE ANALYSIS]</scope>
    <source>
        <tissue>Liver</tissue>
    </source>
</reference>
<reference key="8">
    <citation type="journal article" date="2010" name="Cell">
        <title>A tissue-specific atlas of mouse protein phosphorylation and expression.</title>
        <authorList>
            <person name="Huttlin E.L."/>
            <person name="Jedrychowski M.P."/>
            <person name="Elias J.E."/>
            <person name="Goswami T."/>
            <person name="Rad R."/>
            <person name="Beausoleil S.A."/>
            <person name="Villen J."/>
            <person name="Haas W."/>
            <person name="Sowa M.E."/>
            <person name="Gygi S.P."/>
        </authorList>
    </citation>
    <scope>PHOSPHORYLATION [LARGE SCALE ANALYSIS] AT SER-123; SER-127 AND SER-134</scope>
    <scope>IDENTIFICATION BY MASS SPECTROMETRY [LARGE SCALE ANALYSIS]</scope>
    <source>
        <tissue>Kidney</tissue>
        <tissue>Testis</tissue>
    </source>
</reference>
<protein>
    <recommendedName>
        <fullName>Aprataxin</fullName>
        <ecNumber evidence="8">3.6.1.71</ecNumber>
        <ecNumber evidence="2">3.6.1.72</ecNumber>
    </recommendedName>
    <alternativeName>
        <fullName>Forkhead-associated domain histidine triad-like protein</fullName>
        <shortName>FHA-HIT</shortName>
    </alternativeName>
</protein>
<sequence length="342" mass="38723">MPEAVAKMRVCWLVRQDSRHQRIKLPHLEAVVIGRSPETKITDKKCSRQQVQLKAECNKGYVKVQQMGVNPTSIDSGVIGKDQEKKLLPGQVLHMVNGLYPYIVEFEEVAESPNLTQRKRKRSDCDSEEMEAESGTGLAPGSSPSQCSVSPKKDKNGATKKESLGHWSQGLKMSMKDPKMQVYKDDQVVVIKDKYPKARHHWLVLPWASISSLKVVTSEHLELLKHMHAVGEKVIADFAGSSKLRFRLGYHAIPSMSHVHLHVISQDFDSPCLKNKKHWNSFNTEYFLESQAVIKMVQEAGRVTVKDGTCELLKLPLRCHECQQLLPSIPQLKEHLRKHWGG</sequence>
<organism>
    <name type="scientific">Mus musculus</name>
    <name type="common">Mouse</name>
    <dbReference type="NCBI Taxonomy" id="10090"/>
    <lineage>
        <taxon>Eukaryota</taxon>
        <taxon>Metazoa</taxon>
        <taxon>Chordata</taxon>
        <taxon>Craniata</taxon>
        <taxon>Vertebrata</taxon>
        <taxon>Euteleostomi</taxon>
        <taxon>Mammalia</taxon>
        <taxon>Eutheria</taxon>
        <taxon>Euarchontoglires</taxon>
        <taxon>Glires</taxon>
        <taxon>Rodentia</taxon>
        <taxon>Myomorpha</taxon>
        <taxon>Muroidea</taxon>
        <taxon>Muridae</taxon>
        <taxon>Murinae</taxon>
        <taxon>Mus</taxon>
        <taxon>Mus</taxon>
    </lineage>
</organism>
<evidence type="ECO:0000250" key="1"/>
<evidence type="ECO:0000250" key="2">
    <source>
        <dbReference type="UniProtKB" id="O74859"/>
    </source>
</evidence>
<evidence type="ECO:0000250" key="3">
    <source>
        <dbReference type="UniProtKB" id="Q7Z2E3"/>
    </source>
</evidence>
<evidence type="ECO:0000255" key="4">
    <source>
        <dbReference type="PROSITE-ProRule" id="PRU00042"/>
    </source>
</evidence>
<evidence type="ECO:0000255" key="5">
    <source>
        <dbReference type="PROSITE-ProRule" id="PRU00464"/>
    </source>
</evidence>
<evidence type="ECO:0000256" key="6">
    <source>
        <dbReference type="SAM" id="MobiDB-lite"/>
    </source>
</evidence>
<evidence type="ECO:0000269" key="7">
    <source>
    </source>
</evidence>
<evidence type="ECO:0000269" key="8">
    <source>
    </source>
</evidence>
<evidence type="ECO:0000303" key="9">
    <source>
    </source>
</evidence>
<evidence type="ECO:0000303" key="10">
    <source>
    </source>
</evidence>
<evidence type="ECO:0000305" key="11"/>
<evidence type="ECO:0007744" key="12">
    <source>
    </source>
</evidence>
<feature type="chain" id="PRO_0000109840" description="Aprataxin">
    <location>
        <begin position="1"/>
        <end position="342"/>
    </location>
</feature>
<feature type="domain" description="FHA-like">
    <location>
        <begin position="30"/>
        <end position="79"/>
    </location>
</feature>
<feature type="domain" description="HIT" evidence="5">
    <location>
        <begin position="168"/>
        <end position="273"/>
    </location>
</feature>
<feature type="zinc finger region" description="C2H2-type" evidence="4">
    <location>
        <begin position="317"/>
        <end position="339"/>
    </location>
</feature>
<feature type="region of interest" description="Interactions with ADPRT/PARP1 and NCL" evidence="1">
    <location>
        <begin position="1"/>
        <end position="102"/>
    </location>
</feature>
<feature type="region of interest" description="Disordered" evidence="6">
    <location>
        <begin position="114"/>
        <end position="170"/>
    </location>
</feature>
<feature type="region of interest" description="Interaction with DNA substrate" evidence="3">
    <location>
        <begin position="193"/>
        <end position="197"/>
    </location>
</feature>
<feature type="region of interest" description="Interaction with DNA substrate" evidence="3">
    <location>
        <begin position="255"/>
        <end position="256"/>
    </location>
</feature>
<feature type="short sequence motif" description="Nuclear localization signal" evidence="1">
    <location>
        <begin position="118"/>
        <end position="122"/>
    </location>
</feature>
<feature type="short sequence motif" description="Histidine triad motif" evidence="5">
    <location>
        <begin position="258"/>
        <end position="262"/>
    </location>
</feature>
<feature type="compositionally biased region" description="Basic and acidic residues" evidence="6">
    <location>
        <begin position="151"/>
        <end position="164"/>
    </location>
</feature>
<feature type="active site" description="Tele-AMP-histidine intermediate" evidence="3">
    <location>
        <position position="260"/>
    </location>
</feature>
<feature type="site" description="Interaction with DNA substrate" evidence="3">
    <location>
        <position position="174"/>
    </location>
</feature>
<feature type="site" description="Interaction with DNA substrate" evidence="3">
    <location>
        <position position="251"/>
    </location>
</feature>
<feature type="site" description="Interaction with DNA substrate" evidence="3">
    <location>
        <position position="262"/>
    </location>
</feature>
<feature type="site" description="Interaction with DNA substrate" evidence="3">
    <location>
        <position position="277"/>
    </location>
</feature>
<feature type="modified residue" description="Phosphoserine" evidence="12">
    <location>
        <position position="123"/>
    </location>
</feature>
<feature type="modified residue" description="Phosphoserine" evidence="12">
    <location>
        <position position="127"/>
    </location>
</feature>
<feature type="modified residue" description="Phosphoserine" evidence="12">
    <location>
        <position position="134"/>
    </location>
</feature>
<feature type="splice variant" id="VSP_010542" description="In isoform 2." evidence="10">
    <location>
        <begin position="1"/>
        <end position="66"/>
    </location>
</feature>
<feature type="splice variant" id="VSP_010543" description="In isoform 3 and isoform 4." evidence="9 10">
    <location>
        <begin position="1"/>
        <end position="7"/>
    </location>
</feature>
<feature type="splice variant" id="VSP_010544" description="In isoform 4." evidence="10">
    <location>
        <begin position="67"/>
        <end position="161"/>
    </location>
</feature>
<feature type="sequence conflict" description="In Ref. 4; AAH21872." evidence="11" ref="4">
    <original>K</original>
    <variation>L</variation>
    <location>
        <position position="86"/>
    </location>
</feature>
<feature type="sequence conflict" description="In Ref. 4; AAH21872." evidence="11" ref="4">
    <original>D</original>
    <variation>E</variation>
    <location>
        <position position="237"/>
    </location>
</feature>
<keyword id="KW-0025">Alternative splicing</keyword>
<keyword id="KW-0227">DNA damage</keyword>
<keyword id="KW-0234">DNA repair</keyword>
<keyword id="KW-0238">DNA-binding</keyword>
<keyword id="KW-0378">Hydrolase</keyword>
<keyword id="KW-0479">Metal-binding</keyword>
<keyword id="KW-0539">Nucleus</keyword>
<keyword id="KW-0597">Phosphoprotein</keyword>
<keyword id="KW-1185">Reference proteome</keyword>
<keyword id="KW-0862">Zinc</keyword>
<keyword id="KW-0863">Zinc-finger</keyword>
<proteinExistence type="evidence at protein level"/>
<dbReference type="EC" id="3.6.1.71" evidence="8"/>
<dbReference type="EC" id="3.6.1.72" evidence="2"/>
<dbReference type="EMBL" id="AY040780">
    <property type="protein sequence ID" value="AAK91771.1"/>
    <property type="molecule type" value="mRNA"/>
</dbReference>
<dbReference type="EMBL" id="AY040782">
    <property type="protein sequence ID" value="AAK91773.1"/>
    <property type="molecule type" value="Genomic_DNA"/>
</dbReference>
<dbReference type="EMBL" id="AY208844">
    <property type="protein sequence ID" value="AAP86334.1"/>
    <property type="status" value="ALT_INIT"/>
    <property type="molecule type" value="mRNA"/>
</dbReference>
<dbReference type="EMBL" id="AK005286">
    <property type="protein sequence ID" value="BAB23933.2"/>
    <property type="molecule type" value="mRNA"/>
</dbReference>
<dbReference type="EMBL" id="AK010516">
    <property type="protein sequence ID" value="BAB26998.2"/>
    <property type="molecule type" value="mRNA"/>
</dbReference>
<dbReference type="EMBL" id="AK077351">
    <property type="protein sequence ID" value="BAC36763.1"/>
    <property type="molecule type" value="mRNA"/>
</dbReference>
<dbReference type="EMBL" id="AK088928">
    <property type="protein sequence ID" value="BAC40657.1"/>
    <property type="molecule type" value="mRNA"/>
</dbReference>
<dbReference type="EMBL" id="BC021872">
    <property type="protein sequence ID" value="AAH21872.2"/>
    <property type="molecule type" value="mRNA"/>
</dbReference>
<dbReference type="CCDS" id="CCDS38711.1">
    <molecule id="Q7TQC5-1"/>
</dbReference>
<dbReference type="CCDS" id="CCDS38712.1">
    <molecule id="Q7TQC5-3"/>
</dbReference>
<dbReference type="RefSeq" id="NP_001020615.1">
    <molecule id="Q7TQC5-3"/>
    <property type="nucleotide sequence ID" value="NM_001025444.3"/>
</dbReference>
<dbReference type="RefSeq" id="NP_001020616.1">
    <molecule id="Q7TQC5-2"/>
    <property type="nucleotide sequence ID" value="NM_001025445.2"/>
</dbReference>
<dbReference type="RefSeq" id="NP_079821.3">
    <molecule id="Q7TQC5-1"/>
    <property type="nucleotide sequence ID" value="NM_025545.4"/>
</dbReference>
<dbReference type="RefSeq" id="XP_006538229.1">
    <property type="nucleotide sequence ID" value="XM_006538166.3"/>
</dbReference>
<dbReference type="RefSeq" id="XP_006538230.1">
    <molecule id="Q7TQC5-3"/>
    <property type="nucleotide sequence ID" value="XM_006538167.4"/>
</dbReference>
<dbReference type="RefSeq" id="XP_006538231.1">
    <molecule id="Q7TQC5-3"/>
    <property type="nucleotide sequence ID" value="XM_006538168.4"/>
</dbReference>
<dbReference type="RefSeq" id="XP_006538232.1">
    <molecule id="Q7TQC5-3"/>
    <property type="nucleotide sequence ID" value="XM_006538169.4"/>
</dbReference>
<dbReference type="RefSeq" id="XP_006538233.1">
    <molecule id="Q7TQC5-3"/>
    <property type="nucleotide sequence ID" value="XM_006538170.5"/>
</dbReference>
<dbReference type="RefSeq" id="XP_006538234.1">
    <molecule id="Q7TQC5-2"/>
    <property type="nucleotide sequence ID" value="XM_006538171.4"/>
</dbReference>
<dbReference type="RefSeq" id="XP_030109558.1">
    <molecule id="Q7TQC5-2"/>
    <property type="nucleotide sequence ID" value="XM_030253698.2"/>
</dbReference>
<dbReference type="RefSeq" id="XP_030109559.1">
    <molecule id="Q7TQC5-2"/>
    <property type="nucleotide sequence ID" value="XM_030253699.2"/>
</dbReference>
<dbReference type="RefSeq" id="XP_036020202.1">
    <molecule id="Q7TQC5-2"/>
    <property type="nucleotide sequence ID" value="XM_036164309.1"/>
</dbReference>
<dbReference type="RefSeq" id="XP_036020204.1">
    <molecule id="Q7TQC5-2"/>
    <property type="nucleotide sequence ID" value="XM_036164311.1"/>
</dbReference>
<dbReference type="SMR" id="Q7TQC5"/>
<dbReference type="BioGRID" id="211452">
    <property type="interactions" value="1"/>
</dbReference>
<dbReference type="FunCoup" id="Q7TQC5">
    <property type="interactions" value="3114"/>
</dbReference>
<dbReference type="STRING" id="10090.ENSMUSP00000124264"/>
<dbReference type="iPTMnet" id="Q7TQC5"/>
<dbReference type="PhosphoSitePlus" id="Q7TQC5"/>
<dbReference type="PaxDb" id="10090-ENSMUSP00000124264"/>
<dbReference type="PeptideAtlas" id="Q7TQC5"/>
<dbReference type="ProteomicsDB" id="283190">
    <molecule id="Q7TQC5-1"/>
</dbReference>
<dbReference type="ProteomicsDB" id="283191">
    <molecule id="Q7TQC5-2"/>
</dbReference>
<dbReference type="ProteomicsDB" id="283192">
    <molecule id="Q7TQC5-3"/>
</dbReference>
<dbReference type="ProteomicsDB" id="283193">
    <molecule id="Q7TQC5-4"/>
</dbReference>
<dbReference type="Pumba" id="Q7TQC5"/>
<dbReference type="Antibodypedia" id="10716">
    <property type="antibodies" value="236 antibodies from 30 providers"/>
</dbReference>
<dbReference type="DNASU" id="66408"/>
<dbReference type="Ensembl" id="ENSMUST00000030119.10">
    <molecule id="Q7TQC5-3"/>
    <property type="protein sequence ID" value="ENSMUSP00000030119.4"/>
    <property type="gene ID" value="ENSMUSG00000028411.16"/>
</dbReference>
<dbReference type="Ensembl" id="ENSMUST00000068125.11">
    <molecule id="Q7TQC5-1"/>
    <property type="protein sequence ID" value="ENSMUSP00000124264.2"/>
    <property type="gene ID" value="ENSMUSG00000028411.16"/>
</dbReference>
<dbReference type="Ensembl" id="ENSMUST00000108103.9">
    <molecule id="Q7TQC5-4"/>
    <property type="protein sequence ID" value="ENSMUSP00000103738.3"/>
    <property type="gene ID" value="ENSMUSG00000028411.16"/>
</dbReference>
<dbReference type="GeneID" id="66408"/>
<dbReference type="KEGG" id="mmu:66408"/>
<dbReference type="UCSC" id="uc008sho.1">
    <molecule id="Q7TQC5-1"/>
    <property type="organism name" value="mouse"/>
</dbReference>
<dbReference type="UCSC" id="uc008shr.2">
    <molecule id="Q7TQC5-4"/>
    <property type="organism name" value="mouse"/>
</dbReference>
<dbReference type="AGR" id="MGI:1913658"/>
<dbReference type="CTD" id="54840"/>
<dbReference type="MGI" id="MGI:1913658">
    <property type="gene designation" value="Aptx"/>
</dbReference>
<dbReference type="VEuPathDB" id="HostDB:ENSMUSG00000028411"/>
<dbReference type="eggNOG" id="KOG0562">
    <property type="taxonomic scope" value="Eukaryota"/>
</dbReference>
<dbReference type="eggNOG" id="KOG2134">
    <property type="taxonomic scope" value="Eukaryota"/>
</dbReference>
<dbReference type="GeneTree" id="ENSGT00940000156806"/>
<dbReference type="HOGENOM" id="CLU_066882_2_0_1"/>
<dbReference type="InParanoid" id="Q7TQC5"/>
<dbReference type="OMA" id="QFRTGYH"/>
<dbReference type="OrthoDB" id="3512845at2759"/>
<dbReference type="PhylomeDB" id="Q7TQC5"/>
<dbReference type="TreeFam" id="TF313308"/>
<dbReference type="BRENDA" id="3.6.1.71">
    <property type="organism ID" value="3474"/>
</dbReference>
<dbReference type="BioGRID-ORCS" id="66408">
    <property type="hits" value="3 hits in 115 CRISPR screens"/>
</dbReference>
<dbReference type="ChiTaRS" id="Aptx">
    <property type="organism name" value="mouse"/>
</dbReference>
<dbReference type="PRO" id="PR:Q7TQC5"/>
<dbReference type="Proteomes" id="UP000000589">
    <property type="component" value="Chromosome 4"/>
</dbReference>
<dbReference type="RNAct" id="Q7TQC5">
    <property type="molecule type" value="protein"/>
</dbReference>
<dbReference type="Bgee" id="ENSMUSG00000028411">
    <property type="expression patterns" value="Expressed in seminiferous tubule of testis and 249 other cell types or tissues"/>
</dbReference>
<dbReference type="ExpressionAtlas" id="Q7TQC5">
    <property type="expression patterns" value="baseline and differential"/>
</dbReference>
<dbReference type="GO" id="GO:0000785">
    <property type="term" value="C:chromatin"/>
    <property type="evidence" value="ECO:0007669"/>
    <property type="project" value="Ensembl"/>
</dbReference>
<dbReference type="GO" id="GO:0005730">
    <property type="term" value="C:nucleolus"/>
    <property type="evidence" value="ECO:0007669"/>
    <property type="project" value="UniProtKB-SubCell"/>
</dbReference>
<dbReference type="GO" id="GO:0005654">
    <property type="term" value="C:nucleoplasm"/>
    <property type="evidence" value="ECO:0000304"/>
    <property type="project" value="MGI"/>
</dbReference>
<dbReference type="GO" id="GO:0003682">
    <property type="term" value="F:chromatin binding"/>
    <property type="evidence" value="ECO:0007669"/>
    <property type="project" value="Ensembl"/>
</dbReference>
<dbReference type="GO" id="GO:0003684">
    <property type="term" value="F:damaged DNA binding"/>
    <property type="evidence" value="ECO:0007669"/>
    <property type="project" value="Ensembl"/>
</dbReference>
<dbReference type="GO" id="GO:0033699">
    <property type="term" value="F:DNA 5'-adenosine monophosphate hydrolase activity"/>
    <property type="evidence" value="ECO:0000315"/>
    <property type="project" value="UniProtKB"/>
</dbReference>
<dbReference type="GO" id="GO:0120108">
    <property type="term" value="F:DNA-3'-diphospho-5'-guanosine diphosphatase"/>
    <property type="evidence" value="ECO:0007669"/>
    <property type="project" value="UniProtKB-EC"/>
</dbReference>
<dbReference type="GO" id="GO:0003690">
    <property type="term" value="F:double-stranded DNA binding"/>
    <property type="evidence" value="ECO:0007669"/>
    <property type="project" value="Ensembl"/>
</dbReference>
<dbReference type="GO" id="GO:0003725">
    <property type="term" value="F:double-stranded RNA binding"/>
    <property type="evidence" value="ECO:0007669"/>
    <property type="project" value="Ensembl"/>
</dbReference>
<dbReference type="GO" id="GO:0046872">
    <property type="term" value="F:metal ion binding"/>
    <property type="evidence" value="ECO:0000304"/>
    <property type="project" value="MGI"/>
</dbReference>
<dbReference type="GO" id="GO:0008967">
    <property type="term" value="F:phosphoglycolate phosphatase activity"/>
    <property type="evidence" value="ECO:0007669"/>
    <property type="project" value="Ensembl"/>
</dbReference>
<dbReference type="GO" id="GO:0051219">
    <property type="term" value="F:phosphoprotein binding"/>
    <property type="evidence" value="ECO:0007669"/>
    <property type="project" value="Ensembl"/>
</dbReference>
<dbReference type="GO" id="GO:0008270">
    <property type="term" value="F:zinc ion binding"/>
    <property type="evidence" value="ECO:0007669"/>
    <property type="project" value="UniProtKB-KW"/>
</dbReference>
<dbReference type="GO" id="GO:0031647">
    <property type="term" value="P:regulation of protein stability"/>
    <property type="evidence" value="ECO:0007669"/>
    <property type="project" value="Ensembl"/>
</dbReference>
<dbReference type="GO" id="GO:0000012">
    <property type="term" value="P:single strand break repair"/>
    <property type="evidence" value="ECO:0000315"/>
    <property type="project" value="UniProtKB"/>
</dbReference>
<dbReference type="CDD" id="cd01278">
    <property type="entry name" value="aprataxin_related"/>
    <property type="match status" value="1"/>
</dbReference>
<dbReference type="CDD" id="cd22735">
    <property type="entry name" value="FHA_APTX"/>
    <property type="match status" value="1"/>
</dbReference>
<dbReference type="FunFam" id="2.60.200.20:FF:000010">
    <property type="entry name" value="aprataxin isoform X1"/>
    <property type="match status" value="1"/>
</dbReference>
<dbReference type="FunFam" id="3.30.428.10:FF:000004">
    <property type="entry name" value="aprataxin isoform X2"/>
    <property type="match status" value="1"/>
</dbReference>
<dbReference type="Gene3D" id="2.60.200.20">
    <property type="match status" value="1"/>
</dbReference>
<dbReference type="Gene3D" id="3.30.428.10">
    <property type="entry name" value="HIT-like"/>
    <property type="match status" value="1"/>
</dbReference>
<dbReference type="InterPro" id="IPR041388">
    <property type="entry name" value="FHA_2"/>
</dbReference>
<dbReference type="InterPro" id="IPR047289">
    <property type="entry name" value="FHA_APTX"/>
</dbReference>
<dbReference type="InterPro" id="IPR019808">
    <property type="entry name" value="Histidine_triad_CS"/>
</dbReference>
<dbReference type="InterPro" id="IPR011146">
    <property type="entry name" value="HIT-like"/>
</dbReference>
<dbReference type="InterPro" id="IPR036265">
    <property type="entry name" value="HIT-like_sf"/>
</dbReference>
<dbReference type="InterPro" id="IPR008984">
    <property type="entry name" value="SMAD_FHA_dom_sf"/>
</dbReference>
<dbReference type="InterPro" id="IPR032566">
    <property type="entry name" value="Znf-C2HE"/>
</dbReference>
<dbReference type="InterPro" id="IPR013087">
    <property type="entry name" value="Znf_C2H2_type"/>
</dbReference>
<dbReference type="PANTHER" id="PTHR12486:SF4">
    <property type="entry name" value="APRATAXIN"/>
    <property type="match status" value="1"/>
</dbReference>
<dbReference type="PANTHER" id="PTHR12486">
    <property type="entry name" value="APRATAXIN-RELATED"/>
    <property type="match status" value="1"/>
</dbReference>
<dbReference type="Pfam" id="PF11969">
    <property type="entry name" value="DcpS_C"/>
    <property type="match status" value="1"/>
</dbReference>
<dbReference type="Pfam" id="PF17913">
    <property type="entry name" value="FHA_2"/>
    <property type="match status" value="1"/>
</dbReference>
<dbReference type="Pfam" id="PF16278">
    <property type="entry name" value="zf-C2HE"/>
    <property type="match status" value="1"/>
</dbReference>
<dbReference type="SUPFAM" id="SSF54197">
    <property type="entry name" value="HIT-like"/>
    <property type="match status" value="1"/>
</dbReference>
<dbReference type="SUPFAM" id="SSF49879">
    <property type="entry name" value="SMAD/FHA domain"/>
    <property type="match status" value="1"/>
</dbReference>
<dbReference type="PROSITE" id="PS00892">
    <property type="entry name" value="HIT_1"/>
    <property type="match status" value="1"/>
</dbReference>
<dbReference type="PROSITE" id="PS51084">
    <property type="entry name" value="HIT_2"/>
    <property type="match status" value="1"/>
</dbReference>
<dbReference type="PROSITE" id="PS00028">
    <property type="entry name" value="ZINC_FINGER_C2H2_1"/>
    <property type="match status" value="1"/>
</dbReference>
<dbReference type="PROSITE" id="PS50157">
    <property type="entry name" value="ZINC_FINGER_C2H2_2"/>
    <property type="match status" value="1"/>
</dbReference>
<name>APTX_MOUSE</name>
<gene>
    <name type="primary">Aptx</name>
</gene>
<comment type="function">
    <text evidence="2 3 8">DNA-binding protein involved in single-strand DNA break repair, double-strand DNA break repair and base excision repair. Resolves abortive DNA ligation intermediates formed either at base excision sites, or when DNA ligases attempt to repair non-ligatable breaks induced by reactive oxygen species. Catalyzes the release of adenylate groups covalently linked to 5'-phosphate termini, resulting in the production of 5'-phosphate termini that can be efficiently rejoined (PubMed:16964241). Also able to hydrolyze adenosine 5'-monophosphoramidate (AMP-NH(2)) and diadenosine tetraphosphate (AppppA), but with lower catalytic activity (By similarity). Likewise, catalyzes the release of 3'-linked guanosine (DNAppG) and inosine (DNAppI) from DNA, but has higher specific activity with 5'-linked adenosine (AppDNA) (By similarity).</text>
</comment>
<comment type="catalytic activity">
    <reaction evidence="8">
        <text>a 5'-end adenosine-5'-diphospho-5'-2'-deoxyribonucleoside-DNA + H2O = a 5'-end 5'-phospho-2'-deoxyribonucleoside-DNA + AMP + 2 H(+)</text>
        <dbReference type="Rhea" id="RHEA:52128"/>
        <dbReference type="Rhea" id="RHEA-COMP:13180"/>
        <dbReference type="Rhea" id="RHEA-COMP:13181"/>
        <dbReference type="ChEBI" id="CHEBI:15377"/>
        <dbReference type="ChEBI" id="CHEBI:15378"/>
        <dbReference type="ChEBI" id="CHEBI:136412"/>
        <dbReference type="ChEBI" id="CHEBI:136413"/>
        <dbReference type="ChEBI" id="CHEBI:456215"/>
        <dbReference type="EC" id="3.6.1.71"/>
    </reaction>
</comment>
<comment type="catalytic activity">
    <reaction evidence="8">
        <text>a 5'-end adenosine-5'-diphospho-5'-ribonucleoside-2'-deoxyribonucleotide-DNA + H2O = a 5'-end 5'-phospho-ribonucleoside-2'-deoxyribonucleotide-DNA + AMP + 2 H(+)</text>
        <dbReference type="Rhea" id="RHEA:52132"/>
        <dbReference type="Rhea" id="RHEA-COMP:13182"/>
        <dbReference type="Rhea" id="RHEA-COMP:13183"/>
        <dbReference type="ChEBI" id="CHEBI:15377"/>
        <dbReference type="ChEBI" id="CHEBI:15378"/>
        <dbReference type="ChEBI" id="CHEBI:136414"/>
        <dbReference type="ChEBI" id="CHEBI:136415"/>
        <dbReference type="ChEBI" id="CHEBI:456215"/>
        <dbReference type="EC" id="3.6.1.71"/>
    </reaction>
</comment>
<comment type="catalytic activity">
    <reaction evidence="2">
        <text>a 3'-end 2'-deoxyribonucleotide-3'-diphospho-5'-guanosine-DNA + H2O = a 3'-end 2'-deoxyribonucleotide 3'-phosphate-DNA + GMP + 2 H(+)</text>
        <dbReference type="Rhea" id="RHEA:52140"/>
        <dbReference type="Rhea" id="RHEA-COMP:13186"/>
        <dbReference type="Rhea" id="RHEA-COMP:13187"/>
        <dbReference type="ChEBI" id="CHEBI:15377"/>
        <dbReference type="ChEBI" id="CHEBI:15378"/>
        <dbReference type="ChEBI" id="CHEBI:58115"/>
        <dbReference type="ChEBI" id="CHEBI:136419"/>
        <dbReference type="ChEBI" id="CHEBI:136420"/>
        <dbReference type="EC" id="3.6.1.72"/>
    </reaction>
</comment>
<comment type="subunit">
    <text evidence="3">Interacts with single-strand break repair proteins XRCC1, XRCC4, ADPRT/PARP1 and p53/TP53. Interacts with NCL. Interacts (via FHA-like domain) with MDC1 (phosphorylated).</text>
</comment>
<comment type="subcellular location">
    <subcellularLocation>
        <location evidence="3">Nucleus</location>
        <location evidence="3">Nucleoplasm</location>
    </subcellularLocation>
    <subcellularLocation>
        <location evidence="3">Nucleus</location>
        <location evidence="3">Nucleolus</location>
    </subcellularLocation>
    <text evidence="3">Upon genotoxic stress, colocalizes with XRCC1 at sites of DNA damage. Colocalizes with MDC1 at sites of DNA double-strand breaks. Interaction with NCL is required for nucleolar localization (By similarity).</text>
</comment>
<comment type="alternative products">
    <event type="alternative splicing"/>
    <isoform>
        <id>Q7TQC5-1</id>
        <name>1</name>
        <sequence type="displayed"/>
    </isoform>
    <isoform>
        <id>Q7TQC5-2</id>
        <name>2</name>
        <sequence type="described" ref="VSP_010542"/>
    </isoform>
    <isoform>
        <id>Q7TQC5-3</id>
        <name>3</name>
        <sequence type="described" ref="VSP_010543"/>
    </isoform>
    <isoform>
        <id>Q7TQC5-4</id>
        <name>4</name>
        <sequence type="described" ref="VSP_010543 VSP_010544"/>
    </isoform>
</comment>
<comment type="tissue specificity">
    <text evidence="7">Widely expressed. Expressed in heart, liver, kidney, spleen, lung, muscle, brain stem, spinal cord, cerebellum and brain.</text>
</comment>
<comment type="domain">
    <text evidence="3">The histidine triad, also called HIT motif, forms part of the binding loop for the alpha-phosphate of purine mononucleotide.</text>
</comment>
<comment type="domain">
    <text evidence="1">The FHA-like domain mediates interaction with NCL; XRCC1 and XRCC4.</text>
</comment>
<comment type="domain">
    <text evidence="1">The HIT domain is required for enzymatic activity.</text>
</comment>
<comment type="domain">
    <text evidence="1">The C2H2-type zinc finger mediates DNA-binding.</text>
</comment>
<comment type="sequence caution" evidence="11">
    <conflict type="erroneous initiation">
        <sequence resource="EMBL-CDS" id="AAP86334"/>
    </conflict>
</comment>
<accession>Q7TQC5</accession>
<accession>Q8BPA7</accession>
<accession>Q8C2B5</accession>
<accession>Q8K3D1</accession>
<accession>Q9CQ59</accession>